<proteinExistence type="inferred from homology"/>
<feature type="chain" id="PRO_0000319145" description="Formate-dependent phosphoribosylglycinamide formyltransferase">
    <location>
        <begin position="1"/>
        <end position="404"/>
    </location>
</feature>
<feature type="domain" description="ATP-grasp" evidence="1">
    <location>
        <begin position="123"/>
        <end position="318"/>
    </location>
</feature>
<feature type="binding site" evidence="1">
    <location>
        <begin position="25"/>
        <end position="26"/>
    </location>
    <ligand>
        <name>N(1)-(5-phospho-beta-D-ribosyl)glycinamide</name>
        <dbReference type="ChEBI" id="CHEBI:143788"/>
    </ligand>
</feature>
<feature type="binding site" evidence="1">
    <location>
        <position position="85"/>
    </location>
    <ligand>
        <name>N(1)-(5-phospho-beta-D-ribosyl)glycinamide</name>
        <dbReference type="ChEBI" id="CHEBI:143788"/>
    </ligand>
</feature>
<feature type="binding site" evidence="1">
    <location>
        <position position="118"/>
    </location>
    <ligand>
        <name>ATP</name>
        <dbReference type="ChEBI" id="CHEBI:30616"/>
    </ligand>
</feature>
<feature type="binding site" evidence="1">
    <location>
        <position position="159"/>
    </location>
    <ligand>
        <name>ATP</name>
        <dbReference type="ChEBI" id="CHEBI:30616"/>
    </ligand>
</feature>
<feature type="binding site" evidence="1">
    <location>
        <begin position="164"/>
        <end position="169"/>
    </location>
    <ligand>
        <name>ATP</name>
        <dbReference type="ChEBI" id="CHEBI:30616"/>
    </ligand>
</feature>
<feature type="binding site" evidence="1">
    <location>
        <begin position="199"/>
        <end position="202"/>
    </location>
    <ligand>
        <name>ATP</name>
        <dbReference type="ChEBI" id="CHEBI:30616"/>
    </ligand>
</feature>
<feature type="binding site" evidence="1">
    <location>
        <position position="207"/>
    </location>
    <ligand>
        <name>ATP</name>
        <dbReference type="ChEBI" id="CHEBI:30616"/>
    </ligand>
</feature>
<feature type="binding site" evidence="1">
    <location>
        <position position="277"/>
    </location>
    <ligand>
        <name>Mg(2+)</name>
        <dbReference type="ChEBI" id="CHEBI:18420"/>
    </ligand>
</feature>
<feature type="binding site" evidence="1">
    <location>
        <position position="289"/>
    </location>
    <ligand>
        <name>Mg(2+)</name>
        <dbReference type="ChEBI" id="CHEBI:18420"/>
    </ligand>
</feature>
<feature type="binding site" evidence="1">
    <location>
        <position position="296"/>
    </location>
    <ligand>
        <name>N(1)-(5-phospho-beta-D-ribosyl)glycinamide</name>
        <dbReference type="ChEBI" id="CHEBI:143788"/>
    </ligand>
</feature>
<feature type="binding site" evidence="1">
    <location>
        <position position="365"/>
    </location>
    <ligand>
        <name>N(1)-(5-phospho-beta-D-ribosyl)glycinamide</name>
        <dbReference type="ChEBI" id="CHEBI:143788"/>
    </ligand>
</feature>
<feature type="binding site" evidence="1">
    <location>
        <begin position="372"/>
        <end position="373"/>
    </location>
    <ligand>
        <name>N(1)-(5-phospho-beta-D-ribosyl)glycinamide</name>
        <dbReference type="ChEBI" id="CHEBI:143788"/>
    </ligand>
</feature>
<organism>
    <name type="scientific">Burkholderia lata (strain ATCC 17760 / DSM 23089 / LMG 22485 / NCIMB 9086 / R18194 / 383)</name>
    <dbReference type="NCBI Taxonomy" id="482957"/>
    <lineage>
        <taxon>Bacteria</taxon>
        <taxon>Pseudomonadati</taxon>
        <taxon>Pseudomonadota</taxon>
        <taxon>Betaproteobacteria</taxon>
        <taxon>Burkholderiales</taxon>
        <taxon>Burkholderiaceae</taxon>
        <taxon>Burkholderia</taxon>
        <taxon>Burkholderia cepacia complex</taxon>
    </lineage>
</organism>
<comment type="function">
    <text evidence="1">Involved in the de novo purine biosynthesis. Catalyzes the transfer of formate to 5-phospho-ribosyl-glycinamide (GAR), producing 5-phospho-ribosyl-N-formylglycinamide (FGAR). Formate is provided by PurU via hydrolysis of 10-formyl-tetrahydrofolate.</text>
</comment>
<comment type="catalytic activity">
    <reaction evidence="1">
        <text>N(1)-(5-phospho-beta-D-ribosyl)glycinamide + formate + ATP = N(2)-formyl-N(1)-(5-phospho-beta-D-ribosyl)glycinamide + ADP + phosphate + H(+)</text>
        <dbReference type="Rhea" id="RHEA:24829"/>
        <dbReference type="ChEBI" id="CHEBI:15378"/>
        <dbReference type="ChEBI" id="CHEBI:15740"/>
        <dbReference type="ChEBI" id="CHEBI:30616"/>
        <dbReference type="ChEBI" id="CHEBI:43474"/>
        <dbReference type="ChEBI" id="CHEBI:143788"/>
        <dbReference type="ChEBI" id="CHEBI:147286"/>
        <dbReference type="ChEBI" id="CHEBI:456216"/>
        <dbReference type="EC" id="6.3.1.21"/>
    </reaction>
    <physiologicalReaction direction="left-to-right" evidence="1">
        <dbReference type="Rhea" id="RHEA:24830"/>
    </physiologicalReaction>
</comment>
<comment type="pathway">
    <text evidence="1">Purine metabolism; IMP biosynthesis via de novo pathway; N(2)-formyl-N(1)-(5-phospho-D-ribosyl)glycinamide from N(1)-(5-phospho-D-ribosyl)glycinamide (formate route): step 1/1.</text>
</comment>
<comment type="subunit">
    <text evidence="1">Homodimer.</text>
</comment>
<comment type="similarity">
    <text evidence="1">Belongs to the PurK/PurT family.</text>
</comment>
<dbReference type="EC" id="6.3.1.21" evidence="1"/>
<dbReference type="EMBL" id="CP000151">
    <property type="protein sequence ID" value="ABB09255.1"/>
    <property type="molecule type" value="Genomic_DNA"/>
</dbReference>
<dbReference type="RefSeq" id="WP_011352781.1">
    <property type="nucleotide sequence ID" value="NC_007510.1"/>
</dbReference>
<dbReference type="SMR" id="Q39E61"/>
<dbReference type="GeneID" id="45095548"/>
<dbReference type="KEGG" id="bur:Bcep18194_A5661"/>
<dbReference type="PATRIC" id="fig|482957.22.peg.2634"/>
<dbReference type="HOGENOM" id="CLU_011534_1_3_4"/>
<dbReference type="UniPathway" id="UPA00074">
    <property type="reaction ID" value="UER00127"/>
</dbReference>
<dbReference type="Proteomes" id="UP000002705">
    <property type="component" value="Chromosome 1"/>
</dbReference>
<dbReference type="GO" id="GO:0005829">
    <property type="term" value="C:cytosol"/>
    <property type="evidence" value="ECO:0007669"/>
    <property type="project" value="TreeGrafter"/>
</dbReference>
<dbReference type="GO" id="GO:0005524">
    <property type="term" value="F:ATP binding"/>
    <property type="evidence" value="ECO:0007669"/>
    <property type="project" value="UniProtKB-UniRule"/>
</dbReference>
<dbReference type="GO" id="GO:0000287">
    <property type="term" value="F:magnesium ion binding"/>
    <property type="evidence" value="ECO:0007669"/>
    <property type="project" value="InterPro"/>
</dbReference>
<dbReference type="GO" id="GO:0043815">
    <property type="term" value="F:phosphoribosylglycinamide formyltransferase 2 activity"/>
    <property type="evidence" value="ECO:0007669"/>
    <property type="project" value="UniProtKB-UniRule"/>
</dbReference>
<dbReference type="GO" id="GO:0004644">
    <property type="term" value="F:phosphoribosylglycinamide formyltransferase activity"/>
    <property type="evidence" value="ECO:0007669"/>
    <property type="project" value="InterPro"/>
</dbReference>
<dbReference type="GO" id="GO:0006189">
    <property type="term" value="P:'de novo' IMP biosynthetic process"/>
    <property type="evidence" value="ECO:0007669"/>
    <property type="project" value="UniProtKB-UniRule"/>
</dbReference>
<dbReference type="FunFam" id="3.30.1490.20:FF:000013">
    <property type="entry name" value="Formate-dependent phosphoribosylglycinamide formyltransferase"/>
    <property type="match status" value="1"/>
</dbReference>
<dbReference type="FunFam" id="3.40.50.20:FF:000007">
    <property type="entry name" value="Formate-dependent phosphoribosylglycinamide formyltransferase"/>
    <property type="match status" value="1"/>
</dbReference>
<dbReference type="Gene3D" id="3.40.50.20">
    <property type="match status" value="1"/>
</dbReference>
<dbReference type="Gene3D" id="3.30.1490.20">
    <property type="entry name" value="ATP-grasp fold, A domain"/>
    <property type="match status" value="1"/>
</dbReference>
<dbReference type="Gene3D" id="3.30.470.20">
    <property type="entry name" value="ATP-grasp fold, B domain"/>
    <property type="match status" value="1"/>
</dbReference>
<dbReference type="HAMAP" id="MF_01643">
    <property type="entry name" value="PurT"/>
    <property type="match status" value="1"/>
</dbReference>
<dbReference type="InterPro" id="IPR011761">
    <property type="entry name" value="ATP-grasp"/>
</dbReference>
<dbReference type="InterPro" id="IPR003135">
    <property type="entry name" value="ATP-grasp_carboxylate-amine"/>
</dbReference>
<dbReference type="InterPro" id="IPR013815">
    <property type="entry name" value="ATP_grasp_subdomain_1"/>
</dbReference>
<dbReference type="InterPro" id="IPR016185">
    <property type="entry name" value="PreATP-grasp_dom_sf"/>
</dbReference>
<dbReference type="InterPro" id="IPR005862">
    <property type="entry name" value="PurT"/>
</dbReference>
<dbReference type="InterPro" id="IPR054350">
    <property type="entry name" value="PurT/PurK_preATP-grasp"/>
</dbReference>
<dbReference type="InterPro" id="IPR048740">
    <property type="entry name" value="PurT_C"/>
</dbReference>
<dbReference type="InterPro" id="IPR011054">
    <property type="entry name" value="Rudment_hybrid_motif"/>
</dbReference>
<dbReference type="NCBIfam" id="NF006766">
    <property type="entry name" value="PRK09288.1"/>
    <property type="match status" value="1"/>
</dbReference>
<dbReference type="NCBIfam" id="TIGR01142">
    <property type="entry name" value="purT"/>
    <property type="match status" value="1"/>
</dbReference>
<dbReference type="PANTHER" id="PTHR43055">
    <property type="entry name" value="FORMATE-DEPENDENT PHOSPHORIBOSYLGLYCINAMIDE FORMYLTRANSFERASE"/>
    <property type="match status" value="1"/>
</dbReference>
<dbReference type="PANTHER" id="PTHR43055:SF1">
    <property type="entry name" value="FORMATE-DEPENDENT PHOSPHORIBOSYLGLYCINAMIDE FORMYLTRANSFERASE"/>
    <property type="match status" value="1"/>
</dbReference>
<dbReference type="Pfam" id="PF02222">
    <property type="entry name" value="ATP-grasp"/>
    <property type="match status" value="1"/>
</dbReference>
<dbReference type="Pfam" id="PF21244">
    <property type="entry name" value="PurT_C"/>
    <property type="match status" value="1"/>
</dbReference>
<dbReference type="Pfam" id="PF22660">
    <property type="entry name" value="RS_preATP-grasp-like"/>
    <property type="match status" value="1"/>
</dbReference>
<dbReference type="SUPFAM" id="SSF56059">
    <property type="entry name" value="Glutathione synthetase ATP-binding domain-like"/>
    <property type="match status" value="1"/>
</dbReference>
<dbReference type="SUPFAM" id="SSF52440">
    <property type="entry name" value="PreATP-grasp domain"/>
    <property type="match status" value="1"/>
</dbReference>
<dbReference type="SUPFAM" id="SSF51246">
    <property type="entry name" value="Rudiment single hybrid motif"/>
    <property type="match status" value="1"/>
</dbReference>
<dbReference type="PROSITE" id="PS50975">
    <property type="entry name" value="ATP_GRASP"/>
    <property type="match status" value="1"/>
</dbReference>
<gene>
    <name evidence="1" type="primary">purT</name>
    <name type="ordered locus">Bcep18194_A5661</name>
</gene>
<evidence type="ECO:0000255" key="1">
    <source>
        <dbReference type="HAMAP-Rule" id="MF_01643"/>
    </source>
</evidence>
<name>PURT_BURL3</name>
<accession>Q39E61</accession>
<keyword id="KW-0067">ATP-binding</keyword>
<keyword id="KW-0436">Ligase</keyword>
<keyword id="KW-0460">Magnesium</keyword>
<keyword id="KW-0479">Metal-binding</keyword>
<keyword id="KW-0547">Nucleotide-binding</keyword>
<keyword id="KW-0658">Purine biosynthesis</keyword>
<sequence>MQIGQRLGTPLSPSATRVMLLGAGELGKEVIIALQRLGVEVVAVDRYPDAPGHQVAHRAHVIDMTDAAALRAIVEAERPHLIVPEIEAIATDALAAIEAAGLAEVIPTARATQLTMNREGIRRLAAEELGLPTSPYAFADSFEAFSAAIAKIGMPCVVKPVMSSSGKGQSVVKTEADVKPAWDYAMAGGRVNHGRVIVEGFIDFDYEITQLTVRAIDPATDATRTYFCEPVGHVQVAGDYVESWQPQPMSAVALEKSREIAHKVTEALGGRGMFGVELFVNGDDVWFSEVSPRPHDTGLVTLASQRQSEFELHARAILGLPVDPALGTPAASAVIYGGLDERGIAFEGVREALAVPGADLRLFGKPESFAKRRMGVALATGATVDEARERAKRAAAAVRPVSAR</sequence>
<reference key="1">
    <citation type="submission" date="2005-10" db="EMBL/GenBank/DDBJ databases">
        <title>Complete sequence of chromosome 1 of Burkholderia sp. 383.</title>
        <authorList>
            <consortium name="US DOE Joint Genome Institute"/>
            <person name="Copeland A."/>
            <person name="Lucas S."/>
            <person name="Lapidus A."/>
            <person name="Barry K."/>
            <person name="Detter J.C."/>
            <person name="Glavina T."/>
            <person name="Hammon N."/>
            <person name="Israni S."/>
            <person name="Pitluck S."/>
            <person name="Chain P."/>
            <person name="Malfatti S."/>
            <person name="Shin M."/>
            <person name="Vergez L."/>
            <person name="Schmutz J."/>
            <person name="Larimer F."/>
            <person name="Land M."/>
            <person name="Kyrpides N."/>
            <person name="Lykidis A."/>
            <person name="Richardson P."/>
        </authorList>
    </citation>
    <scope>NUCLEOTIDE SEQUENCE [LARGE SCALE GENOMIC DNA]</scope>
    <source>
        <strain>ATCC 17760 / DSM 23089 / LMG 22485 / NCIMB 9086 / R18194 / 383</strain>
    </source>
</reference>
<protein>
    <recommendedName>
        <fullName evidence="1">Formate-dependent phosphoribosylglycinamide formyltransferase</fullName>
        <ecNumber evidence="1">6.3.1.21</ecNumber>
    </recommendedName>
    <alternativeName>
        <fullName evidence="1">5'-phosphoribosylglycinamide transformylase 2</fullName>
    </alternativeName>
    <alternativeName>
        <fullName evidence="1">Formate-dependent GAR transformylase</fullName>
    </alternativeName>
    <alternativeName>
        <fullName evidence="1">GAR transformylase 2</fullName>
        <shortName evidence="1">GART 2</shortName>
    </alternativeName>
    <alternativeName>
        <fullName evidence="1">Non-folate glycinamide ribonucleotide transformylase</fullName>
    </alternativeName>
    <alternativeName>
        <fullName evidence="1">Phosphoribosylglycinamide formyltransferase 2</fullName>
    </alternativeName>
</protein>